<reference key="1">
    <citation type="submission" date="2007-08" db="EMBL/GenBank/DDBJ databases">
        <authorList>
            <consortium name="The Citrobacter koseri Genome Sequencing Project"/>
            <person name="McClelland M."/>
            <person name="Sanderson E.K."/>
            <person name="Porwollik S."/>
            <person name="Spieth J."/>
            <person name="Clifton W.S."/>
            <person name="Latreille P."/>
            <person name="Courtney L."/>
            <person name="Wang C."/>
            <person name="Pepin K."/>
            <person name="Bhonagiri V."/>
            <person name="Nash W."/>
            <person name="Johnson M."/>
            <person name="Thiruvilangam P."/>
            <person name="Wilson R."/>
        </authorList>
    </citation>
    <scope>NUCLEOTIDE SEQUENCE [LARGE SCALE GENOMIC DNA]</scope>
    <source>
        <strain>ATCC BAA-895 / CDC 4225-83 / SGSC4696</strain>
    </source>
</reference>
<proteinExistence type="inferred from homology"/>
<organism>
    <name type="scientific">Citrobacter koseri (strain ATCC BAA-895 / CDC 4225-83 / SGSC4696)</name>
    <dbReference type="NCBI Taxonomy" id="290338"/>
    <lineage>
        <taxon>Bacteria</taxon>
        <taxon>Pseudomonadati</taxon>
        <taxon>Pseudomonadota</taxon>
        <taxon>Gammaproteobacteria</taxon>
        <taxon>Enterobacterales</taxon>
        <taxon>Enterobacteriaceae</taxon>
        <taxon>Citrobacter</taxon>
    </lineage>
</organism>
<accession>A8AK17</accession>
<feature type="chain" id="PRO_1000022666" description="Trigger factor">
    <location>
        <begin position="1"/>
        <end position="432"/>
    </location>
</feature>
<feature type="domain" description="PPIase FKBP-type" evidence="1">
    <location>
        <begin position="161"/>
        <end position="246"/>
    </location>
</feature>
<gene>
    <name evidence="1" type="primary">tig</name>
    <name type="ordered locus">CKO_02724</name>
</gene>
<evidence type="ECO:0000255" key="1">
    <source>
        <dbReference type="HAMAP-Rule" id="MF_00303"/>
    </source>
</evidence>
<sequence>MQVSVETTQGLGRRVTITIAADSIETAVKSELVNVAKKVRIDGFRKGKVPMNVVAQRYGASVRQDVLGDLMSRNFVDAIIKEKINPAGAPNYVPGEYKLGEDFTYAVEFEVYPEVELTGLESIEVEKPVVEVTDADVDVMLDTLRKQQATWKDKDGAADAEDRVTIDFTGSVDGEEFEGGKASDFVLAMGQGRMIPGFEDGIKGHKAGEEFTIDVTFPEEYHAENLKGKAAKFAINLKKVEERELPELTEEFIKRFGVEDGSVAGLRTEVRKNMERELKGAVRNRVKSQAIEGLVKANDIDVPSALIDSEVDVLRRQAAQRFGGNEKQALELPRELFEEQAKRRVVVGLLLGEVIRTQELKADEERVKGLIEEMASAYEDPKEVIEFYSKNKELMDNMRNVALEEQAVEAVLAKAKVTEKATSFNELMNQQA</sequence>
<protein>
    <recommendedName>
        <fullName evidence="1">Trigger factor</fullName>
        <shortName evidence="1">TF</shortName>
        <ecNumber evidence="1">5.2.1.8</ecNumber>
    </recommendedName>
    <alternativeName>
        <fullName evidence="1">PPIase</fullName>
    </alternativeName>
</protein>
<dbReference type="EC" id="5.2.1.8" evidence="1"/>
<dbReference type="EMBL" id="CP000822">
    <property type="protein sequence ID" value="ABV13830.1"/>
    <property type="molecule type" value="Genomic_DNA"/>
</dbReference>
<dbReference type="RefSeq" id="WP_012133545.1">
    <property type="nucleotide sequence ID" value="NC_009792.1"/>
</dbReference>
<dbReference type="BMRB" id="A8AK17"/>
<dbReference type="SMR" id="A8AK17"/>
<dbReference type="STRING" id="290338.CKO_02724"/>
<dbReference type="GeneID" id="45136579"/>
<dbReference type="KEGG" id="cko:CKO_02724"/>
<dbReference type="HOGENOM" id="CLU_033058_2_0_6"/>
<dbReference type="OrthoDB" id="9767721at2"/>
<dbReference type="Proteomes" id="UP000008148">
    <property type="component" value="Chromosome"/>
</dbReference>
<dbReference type="GO" id="GO:0005737">
    <property type="term" value="C:cytoplasm"/>
    <property type="evidence" value="ECO:0007669"/>
    <property type="project" value="UniProtKB-SubCell"/>
</dbReference>
<dbReference type="GO" id="GO:0003755">
    <property type="term" value="F:peptidyl-prolyl cis-trans isomerase activity"/>
    <property type="evidence" value="ECO:0007669"/>
    <property type="project" value="UniProtKB-UniRule"/>
</dbReference>
<dbReference type="GO" id="GO:0044183">
    <property type="term" value="F:protein folding chaperone"/>
    <property type="evidence" value="ECO:0007669"/>
    <property type="project" value="TreeGrafter"/>
</dbReference>
<dbReference type="GO" id="GO:0043022">
    <property type="term" value="F:ribosome binding"/>
    <property type="evidence" value="ECO:0007669"/>
    <property type="project" value="TreeGrafter"/>
</dbReference>
<dbReference type="GO" id="GO:0051083">
    <property type="term" value="P:'de novo' cotranslational protein folding"/>
    <property type="evidence" value="ECO:0007669"/>
    <property type="project" value="TreeGrafter"/>
</dbReference>
<dbReference type="GO" id="GO:0051301">
    <property type="term" value="P:cell division"/>
    <property type="evidence" value="ECO:0007669"/>
    <property type="project" value="UniProtKB-KW"/>
</dbReference>
<dbReference type="GO" id="GO:0061077">
    <property type="term" value="P:chaperone-mediated protein folding"/>
    <property type="evidence" value="ECO:0007669"/>
    <property type="project" value="TreeGrafter"/>
</dbReference>
<dbReference type="GO" id="GO:0015031">
    <property type="term" value="P:protein transport"/>
    <property type="evidence" value="ECO:0007669"/>
    <property type="project" value="UniProtKB-UniRule"/>
</dbReference>
<dbReference type="GO" id="GO:0043335">
    <property type="term" value="P:protein unfolding"/>
    <property type="evidence" value="ECO:0007669"/>
    <property type="project" value="TreeGrafter"/>
</dbReference>
<dbReference type="FunFam" id="1.10.3120.10:FF:000001">
    <property type="entry name" value="Trigger factor"/>
    <property type="match status" value="1"/>
</dbReference>
<dbReference type="FunFam" id="3.10.50.40:FF:000001">
    <property type="entry name" value="Trigger factor"/>
    <property type="match status" value="1"/>
</dbReference>
<dbReference type="FunFam" id="3.30.70.1050:FF:000001">
    <property type="entry name" value="Trigger factor"/>
    <property type="match status" value="1"/>
</dbReference>
<dbReference type="Gene3D" id="3.10.50.40">
    <property type="match status" value="1"/>
</dbReference>
<dbReference type="Gene3D" id="3.30.70.1050">
    <property type="entry name" value="Trigger factor ribosome-binding domain"/>
    <property type="match status" value="1"/>
</dbReference>
<dbReference type="Gene3D" id="1.10.3120.10">
    <property type="entry name" value="Trigger factor, C-terminal domain"/>
    <property type="match status" value="1"/>
</dbReference>
<dbReference type="HAMAP" id="MF_00303">
    <property type="entry name" value="Trigger_factor_Tig"/>
    <property type="match status" value="1"/>
</dbReference>
<dbReference type="InterPro" id="IPR046357">
    <property type="entry name" value="PPIase_dom_sf"/>
</dbReference>
<dbReference type="InterPro" id="IPR001179">
    <property type="entry name" value="PPIase_FKBP_dom"/>
</dbReference>
<dbReference type="InterPro" id="IPR005215">
    <property type="entry name" value="Trig_fac"/>
</dbReference>
<dbReference type="InterPro" id="IPR008880">
    <property type="entry name" value="Trigger_fac_C"/>
</dbReference>
<dbReference type="InterPro" id="IPR037041">
    <property type="entry name" value="Trigger_fac_C_sf"/>
</dbReference>
<dbReference type="InterPro" id="IPR008881">
    <property type="entry name" value="Trigger_fac_ribosome-bd_bac"/>
</dbReference>
<dbReference type="InterPro" id="IPR036611">
    <property type="entry name" value="Trigger_fac_ribosome-bd_sf"/>
</dbReference>
<dbReference type="InterPro" id="IPR027304">
    <property type="entry name" value="Trigger_fact/SurA_dom_sf"/>
</dbReference>
<dbReference type="NCBIfam" id="TIGR00115">
    <property type="entry name" value="tig"/>
    <property type="match status" value="1"/>
</dbReference>
<dbReference type="PANTHER" id="PTHR30560">
    <property type="entry name" value="TRIGGER FACTOR CHAPERONE AND PEPTIDYL-PROLYL CIS/TRANS ISOMERASE"/>
    <property type="match status" value="1"/>
</dbReference>
<dbReference type="PANTHER" id="PTHR30560:SF3">
    <property type="entry name" value="TRIGGER FACTOR-LIKE PROTEIN TIG, CHLOROPLASTIC"/>
    <property type="match status" value="1"/>
</dbReference>
<dbReference type="Pfam" id="PF00254">
    <property type="entry name" value="FKBP_C"/>
    <property type="match status" value="1"/>
</dbReference>
<dbReference type="Pfam" id="PF05698">
    <property type="entry name" value="Trigger_C"/>
    <property type="match status" value="1"/>
</dbReference>
<dbReference type="Pfam" id="PF05697">
    <property type="entry name" value="Trigger_N"/>
    <property type="match status" value="1"/>
</dbReference>
<dbReference type="PIRSF" id="PIRSF003095">
    <property type="entry name" value="Trigger_factor"/>
    <property type="match status" value="1"/>
</dbReference>
<dbReference type="SUPFAM" id="SSF54534">
    <property type="entry name" value="FKBP-like"/>
    <property type="match status" value="1"/>
</dbReference>
<dbReference type="SUPFAM" id="SSF109998">
    <property type="entry name" value="Triger factor/SurA peptide-binding domain-like"/>
    <property type="match status" value="1"/>
</dbReference>
<dbReference type="SUPFAM" id="SSF102735">
    <property type="entry name" value="Trigger factor ribosome-binding domain"/>
    <property type="match status" value="1"/>
</dbReference>
<dbReference type="PROSITE" id="PS50059">
    <property type="entry name" value="FKBP_PPIASE"/>
    <property type="match status" value="1"/>
</dbReference>
<name>TIG_CITK8</name>
<comment type="function">
    <text evidence="1">Involved in protein export. Acts as a chaperone by maintaining the newly synthesized protein in an open conformation. Functions as a peptidyl-prolyl cis-trans isomerase.</text>
</comment>
<comment type="catalytic activity">
    <reaction evidence="1">
        <text>[protein]-peptidylproline (omega=180) = [protein]-peptidylproline (omega=0)</text>
        <dbReference type="Rhea" id="RHEA:16237"/>
        <dbReference type="Rhea" id="RHEA-COMP:10747"/>
        <dbReference type="Rhea" id="RHEA-COMP:10748"/>
        <dbReference type="ChEBI" id="CHEBI:83833"/>
        <dbReference type="ChEBI" id="CHEBI:83834"/>
        <dbReference type="EC" id="5.2.1.8"/>
    </reaction>
</comment>
<comment type="subcellular location">
    <subcellularLocation>
        <location>Cytoplasm</location>
    </subcellularLocation>
    <text evidence="1">About half TF is bound to the ribosome near the polypeptide exit tunnel while the other half is free in the cytoplasm.</text>
</comment>
<comment type="domain">
    <text evidence="1">Consists of 3 domains; the N-terminus binds the ribosome, the middle domain has PPIase activity, while the C-terminus has intrinsic chaperone activity on its own.</text>
</comment>
<comment type="similarity">
    <text evidence="1">Belongs to the FKBP-type PPIase family. Tig subfamily.</text>
</comment>
<keyword id="KW-0131">Cell cycle</keyword>
<keyword id="KW-0132">Cell division</keyword>
<keyword id="KW-0143">Chaperone</keyword>
<keyword id="KW-0963">Cytoplasm</keyword>
<keyword id="KW-0413">Isomerase</keyword>
<keyword id="KW-1185">Reference proteome</keyword>
<keyword id="KW-0697">Rotamase</keyword>